<proteinExistence type="inferred from homology"/>
<accession>B9KK27</accession>
<name>BCHL_CERSK</name>
<protein>
    <recommendedName>
        <fullName evidence="1">Light-independent protochlorophyllide reductase iron-sulfur ATP-binding protein</fullName>
        <shortName evidence="1">DPOR subunit L</shortName>
        <shortName evidence="1">LI-POR subunit L</shortName>
        <ecNumber evidence="1">1.3.7.7</ecNumber>
    </recommendedName>
</protein>
<sequence>MSPKDLTIPTGADGEGSVQVHLDEADKITGAKVFAVYGKGGIGKSTTSSNLSAAFSILGKRVLQIGCDPKHDSTFTLTGSLVPTVIDVLKDVDFHPEELRPEDFVFEGFNGVMCVEAGGPPAGTGCGGYVVGQTVKLLKQHHLLDDTDVVIFDVLGDVVCGGFAAPLQHADQAVVVTANDFDSIYAMNRIIAAVQAKSKNYKVRLAGCVANRSRATDEVDRFCKETNFRRLAHMPDLDAIRRSRLKKKTLFEMDEDQDVLAARAEYIRLAESLWRGLDPIDPHSLPDRDIFELLGFD</sequence>
<feature type="chain" id="PRO_1000133445" description="Light-independent protochlorophyllide reductase iron-sulfur ATP-binding protein">
    <location>
        <begin position="1"/>
        <end position="297"/>
    </location>
</feature>
<feature type="binding site" evidence="1">
    <location>
        <begin position="41"/>
        <end position="46"/>
    </location>
    <ligand>
        <name>ATP</name>
        <dbReference type="ChEBI" id="CHEBI:30616"/>
    </ligand>
</feature>
<feature type="binding site" evidence="1">
    <location>
        <position position="45"/>
    </location>
    <ligand>
        <name>Mg(2+)</name>
        <dbReference type="ChEBI" id="CHEBI:18420"/>
    </ligand>
</feature>
<feature type="binding site" evidence="1">
    <location>
        <position position="70"/>
    </location>
    <ligand>
        <name>ATP</name>
        <dbReference type="ChEBI" id="CHEBI:30616"/>
    </ligand>
</feature>
<feature type="binding site" evidence="1">
    <location>
        <position position="126"/>
    </location>
    <ligand>
        <name>[4Fe-4S] cluster</name>
        <dbReference type="ChEBI" id="CHEBI:49883"/>
        <note>ligand shared between dimeric partners</note>
    </ligand>
</feature>
<feature type="binding site" evidence="1">
    <location>
        <position position="160"/>
    </location>
    <ligand>
        <name>[4Fe-4S] cluster</name>
        <dbReference type="ChEBI" id="CHEBI:49883"/>
        <note>ligand shared between dimeric partners</note>
    </ligand>
</feature>
<feature type="binding site" evidence="1">
    <location>
        <begin position="211"/>
        <end position="212"/>
    </location>
    <ligand>
        <name>ATP</name>
        <dbReference type="ChEBI" id="CHEBI:30616"/>
    </ligand>
</feature>
<feature type="binding site" evidence="1">
    <location>
        <begin position="235"/>
        <end position="237"/>
    </location>
    <ligand>
        <name>ATP</name>
        <dbReference type="ChEBI" id="CHEBI:30616"/>
    </ligand>
</feature>
<reference key="1">
    <citation type="journal article" date="2009" name="J. Bacteriol.">
        <title>Complete genome sequence of Rhodobacter sphaeroides KD131.</title>
        <authorList>
            <person name="Lim S.-K."/>
            <person name="Kim S.J."/>
            <person name="Cha S.H."/>
            <person name="Oh Y.-K."/>
            <person name="Rhee H.-J."/>
            <person name="Kim M.-S."/>
            <person name="Lee J.K."/>
        </authorList>
    </citation>
    <scope>NUCLEOTIDE SEQUENCE [LARGE SCALE GENOMIC DNA]</scope>
    <source>
        <strain>KD131 / KCTC 12085</strain>
    </source>
</reference>
<dbReference type="EC" id="1.3.7.7" evidence="1"/>
<dbReference type="EMBL" id="CP001150">
    <property type="protein sequence ID" value="ACM01474.1"/>
    <property type="molecule type" value="Genomic_DNA"/>
</dbReference>
<dbReference type="RefSeq" id="WP_011338126.1">
    <property type="nucleotide sequence ID" value="NC_011963.1"/>
</dbReference>
<dbReference type="SMR" id="B9KK27"/>
<dbReference type="GeneID" id="67447021"/>
<dbReference type="KEGG" id="rsk:RSKD131_1614"/>
<dbReference type="HOGENOM" id="CLU_059373_2_0_5"/>
<dbReference type="UniPathway" id="UPA00671"/>
<dbReference type="GO" id="GO:0051539">
    <property type="term" value="F:4 iron, 4 sulfur cluster binding"/>
    <property type="evidence" value="ECO:0007669"/>
    <property type="project" value="UniProtKB-UniRule"/>
</dbReference>
<dbReference type="GO" id="GO:0005524">
    <property type="term" value="F:ATP binding"/>
    <property type="evidence" value="ECO:0007669"/>
    <property type="project" value="UniProtKB-UniRule"/>
</dbReference>
<dbReference type="GO" id="GO:0046872">
    <property type="term" value="F:metal ion binding"/>
    <property type="evidence" value="ECO:0007669"/>
    <property type="project" value="UniProtKB-KW"/>
</dbReference>
<dbReference type="GO" id="GO:0016730">
    <property type="term" value="F:oxidoreductase activity, acting on iron-sulfur proteins as donors"/>
    <property type="evidence" value="ECO:0007669"/>
    <property type="project" value="InterPro"/>
</dbReference>
<dbReference type="GO" id="GO:0016636">
    <property type="term" value="F:oxidoreductase activity, acting on the CH-CH group of donors, iron-sulfur protein as acceptor"/>
    <property type="evidence" value="ECO:0007669"/>
    <property type="project" value="UniProtKB-UniRule"/>
</dbReference>
<dbReference type="GO" id="GO:0036070">
    <property type="term" value="P:light-independent bacteriochlorophyll biosynthetic process"/>
    <property type="evidence" value="ECO:0007669"/>
    <property type="project" value="UniProtKB-UniRule"/>
</dbReference>
<dbReference type="GO" id="GO:0019685">
    <property type="term" value="P:photosynthesis, dark reaction"/>
    <property type="evidence" value="ECO:0007669"/>
    <property type="project" value="InterPro"/>
</dbReference>
<dbReference type="CDD" id="cd02032">
    <property type="entry name" value="Bchl-like"/>
    <property type="match status" value="1"/>
</dbReference>
<dbReference type="Gene3D" id="3.40.50.300">
    <property type="entry name" value="P-loop containing nucleotide triphosphate hydrolases"/>
    <property type="match status" value="1"/>
</dbReference>
<dbReference type="HAMAP" id="MF_00355">
    <property type="entry name" value="ChlL_BchL"/>
    <property type="match status" value="1"/>
</dbReference>
<dbReference type="InterPro" id="IPR030655">
    <property type="entry name" value="NifH/chlL_CS"/>
</dbReference>
<dbReference type="InterPro" id="IPR000392">
    <property type="entry name" value="NifH/frxC"/>
</dbReference>
<dbReference type="InterPro" id="IPR027417">
    <property type="entry name" value="P-loop_NTPase"/>
</dbReference>
<dbReference type="InterPro" id="IPR005971">
    <property type="entry name" value="Protochlorophyllide_ATP-bd"/>
</dbReference>
<dbReference type="NCBIfam" id="TIGR01281">
    <property type="entry name" value="DPOR_bchL"/>
    <property type="match status" value="1"/>
</dbReference>
<dbReference type="PANTHER" id="PTHR42864">
    <property type="entry name" value="LIGHT-INDEPENDENT PROTOCHLOROPHYLLIDE REDUCTASE IRON-SULFUR ATP-BINDING PROTEIN"/>
    <property type="match status" value="1"/>
</dbReference>
<dbReference type="PANTHER" id="PTHR42864:SF2">
    <property type="entry name" value="LIGHT-INDEPENDENT PROTOCHLOROPHYLLIDE REDUCTASE IRON-SULFUR ATP-BINDING PROTEIN"/>
    <property type="match status" value="1"/>
</dbReference>
<dbReference type="Pfam" id="PF00142">
    <property type="entry name" value="Fer4_NifH"/>
    <property type="match status" value="1"/>
</dbReference>
<dbReference type="PIRSF" id="PIRSF000363">
    <property type="entry name" value="Nitrogenase_iron"/>
    <property type="match status" value="1"/>
</dbReference>
<dbReference type="PRINTS" id="PR00091">
    <property type="entry name" value="NITROGNASEII"/>
</dbReference>
<dbReference type="SUPFAM" id="SSF52540">
    <property type="entry name" value="P-loop containing nucleoside triphosphate hydrolases"/>
    <property type="match status" value="1"/>
</dbReference>
<dbReference type="PROSITE" id="PS00746">
    <property type="entry name" value="NIFH_FRXC_1"/>
    <property type="match status" value="1"/>
</dbReference>
<dbReference type="PROSITE" id="PS00692">
    <property type="entry name" value="NIFH_FRXC_2"/>
    <property type="match status" value="1"/>
</dbReference>
<dbReference type="PROSITE" id="PS51026">
    <property type="entry name" value="NIFH_FRXC_3"/>
    <property type="match status" value="1"/>
</dbReference>
<organism>
    <name type="scientific">Cereibacter sphaeroides (strain KD131 / KCTC 12085)</name>
    <name type="common">Rhodobacter sphaeroides</name>
    <dbReference type="NCBI Taxonomy" id="557760"/>
    <lineage>
        <taxon>Bacteria</taxon>
        <taxon>Pseudomonadati</taxon>
        <taxon>Pseudomonadota</taxon>
        <taxon>Alphaproteobacteria</taxon>
        <taxon>Rhodobacterales</taxon>
        <taxon>Paracoccaceae</taxon>
        <taxon>Cereibacter</taxon>
    </lineage>
</organism>
<keyword id="KW-0004">4Fe-4S</keyword>
<keyword id="KW-0067">ATP-binding</keyword>
<keyword id="KW-0077">Bacteriochlorophyll biosynthesis</keyword>
<keyword id="KW-0149">Chlorophyll biosynthesis</keyword>
<keyword id="KW-0408">Iron</keyword>
<keyword id="KW-0411">Iron-sulfur</keyword>
<keyword id="KW-0460">Magnesium</keyword>
<keyword id="KW-0479">Metal-binding</keyword>
<keyword id="KW-0547">Nucleotide-binding</keyword>
<keyword id="KW-0560">Oxidoreductase</keyword>
<keyword id="KW-0602">Photosynthesis</keyword>
<gene>
    <name evidence="1" type="primary">bchL</name>
    <name type="ordered locus">RSKD131_1614</name>
</gene>
<comment type="function">
    <text evidence="1">Component of the dark-operative protochlorophyllide reductase (DPOR) that uses Mg-ATP and reduced ferredoxin to reduce ring D of protochlorophyllide (Pchlide) to form chlorophyllide a (Chlide). This reaction is light-independent. The L component serves as a unique electron donor to the NB-component of the complex, and binds Mg-ATP.</text>
</comment>
<comment type="catalytic activity">
    <reaction evidence="1">
        <text>chlorophyllide a + oxidized 2[4Fe-4S]-[ferredoxin] + 2 ADP + 2 phosphate = protochlorophyllide a + reduced 2[4Fe-4S]-[ferredoxin] + 2 ATP + 2 H2O</text>
        <dbReference type="Rhea" id="RHEA:28202"/>
        <dbReference type="Rhea" id="RHEA-COMP:10002"/>
        <dbReference type="Rhea" id="RHEA-COMP:10004"/>
        <dbReference type="ChEBI" id="CHEBI:15377"/>
        <dbReference type="ChEBI" id="CHEBI:30616"/>
        <dbReference type="ChEBI" id="CHEBI:33722"/>
        <dbReference type="ChEBI" id="CHEBI:33723"/>
        <dbReference type="ChEBI" id="CHEBI:43474"/>
        <dbReference type="ChEBI" id="CHEBI:83348"/>
        <dbReference type="ChEBI" id="CHEBI:83350"/>
        <dbReference type="ChEBI" id="CHEBI:456216"/>
        <dbReference type="EC" id="1.3.7.7"/>
    </reaction>
</comment>
<comment type="cofactor">
    <cofactor evidence="1">
        <name>[4Fe-4S] cluster</name>
        <dbReference type="ChEBI" id="CHEBI:49883"/>
    </cofactor>
    <text evidence="1">Binds 1 [4Fe-4S] cluster per dimer.</text>
</comment>
<comment type="pathway">
    <text evidence="1">Porphyrin-containing compound metabolism; bacteriochlorophyll biosynthesis (light-independent).</text>
</comment>
<comment type="subunit">
    <text evidence="1">Homodimer. Protochlorophyllide reductase is composed of three subunits; BchL, BchN and BchB.</text>
</comment>
<comment type="similarity">
    <text evidence="1">Belongs to the NifH/BchL/ChlL family.</text>
</comment>
<evidence type="ECO:0000255" key="1">
    <source>
        <dbReference type="HAMAP-Rule" id="MF_00355"/>
    </source>
</evidence>